<dbReference type="EMBL" id="CP000826">
    <property type="protein sequence ID" value="ABV42994.1"/>
    <property type="molecule type" value="Genomic_DNA"/>
</dbReference>
<dbReference type="SMR" id="A8GIQ4"/>
<dbReference type="STRING" id="399741.Spro_3899"/>
<dbReference type="KEGG" id="spe:Spro_3899"/>
<dbReference type="eggNOG" id="COG0354">
    <property type="taxonomic scope" value="Bacteria"/>
</dbReference>
<dbReference type="HOGENOM" id="CLU_007884_6_1_6"/>
<dbReference type="OrthoDB" id="9796287at2"/>
<dbReference type="GO" id="GO:0005737">
    <property type="term" value="C:cytoplasm"/>
    <property type="evidence" value="ECO:0007669"/>
    <property type="project" value="UniProtKB-SubCell"/>
</dbReference>
<dbReference type="GO" id="GO:0005542">
    <property type="term" value="F:folic acid binding"/>
    <property type="evidence" value="ECO:0007669"/>
    <property type="project" value="UniProtKB-UniRule"/>
</dbReference>
<dbReference type="GO" id="GO:0016226">
    <property type="term" value="P:iron-sulfur cluster assembly"/>
    <property type="evidence" value="ECO:0007669"/>
    <property type="project" value="TreeGrafter"/>
</dbReference>
<dbReference type="GO" id="GO:0009451">
    <property type="term" value="P:RNA modification"/>
    <property type="evidence" value="ECO:0007669"/>
    <property type="project" value="InterPro"/>
</dbReference>
<dbReference type="GO" id="GO:0008033">
    <property type="term" value="P:tRNA processing"/>
    <property type="evidence" value="ECO:0007669"/>
    <property type="project" value="UniProtKB-UniRule"/>
</dbReference>
<dbReference type="FunFam" id="2.40.30.160:FF:000001">
    <property type="entry name" value="tRNA-modifying protein YgfZ"/>
    <property type="match status" value="1"/>
</dbReference>
<dbReference type="FunFam" id="3.30.70.1400:FF:000002">
    <property type="entry name" value="tRNA-modifying protein YgfZ"/>
    <property type="match status" value="1"/>
</dbReference>
<dbReference type="FunFam" id="3.30.70.1630:FF:000001">
    <property type="entry name" value="tRNA-modifying protein YgfZ"/>
    <property type="match status" value="1"/>
</dbReference>
<dbReference type="Gene3D" id="2.40.30.160">
    <property type="match status" value="1"/>
</dbReference>
<dbReference type="Gene3D" id="3.30.70.1630">
    <property type="match status" value="1"/>
</dbReference>
<dbReference type="Gene3D" id="3.30.70.1400">
    <property type="entry name" value="Aminomethyltransferase beta-barrel domains"/>
    <property type="match status" value="1"/>
</dbReference>
<dbReference type="HAMAP" id="MF_01175">
    <property type="entry name" value="tRNA_modifying_YgfZ"/>
    <property type="match status" value="1"/>
</dbReference>
<dbReference type="InterPro" id="IPR029043">
    <property type="entry name" value="GcvT/YgfZ_C"/>
</dbReference>
<dbReference type="InterPro" id="IPR023758">
    <property type="entry name" value="tRNA-modifying_YgfZ"/>
</dbReference>
<dbReference type="InterPro" id="IPR045179">
    <property type="entry name" value="YgfZ/GcvT"/>
</dbReference>
<dbReference type="InterPro" id="IPR017703">
    <property type="entry name" value="YgfZ/GcvT_CS"/>
</dbReference>
<dbReference type="InterPro" id="IPR048451">
    <property type="entry name" value="YgfZ_barrel"/>
</dbReference>
<dbReference type="NCBIfam" id="NF007110">
    <property type="entry name" value="PRK09559.1"/>
    <property type="match status" value="1"/>
</dbReference>
<dbReference type="NCBIfam" id="TIGR03317">
    <property type="entry name" value="ygfZ_signature"/>
    <property type="match status" value="1"/>
</dbReference>
<dbReference type="PANTHER" id="PTHR22602">
    <property type="entry name" value="TRANSFERASE CAF17, MITOCHONDRIAL-RELATED"/>
    <property type="match status" value="1"/>
</dbReference>
<dbReference type="PANTHER" id="PTHR22602:SF0">
    <property type="entry name" value="TRANSFERASE CAF17, MITOCHONDRIAL-RELATED"/>
    <property type="match status" value="1"/>
</dbReference>
<dbReference type="Pfam" id="PF21130">
    <property type="entry name" value="YgfZ_barrel"/>
    <property type="match status" value="1"/>
</dbReference>
<dbReference type="SUPFAM" id="SSF101790">
    <property type="entry name" value="Aminomethyltransferase beta-barrel domain"/>
    <property type="match status" value="1"/>
</dbReference>
<dbReference type="SUPFAM" id="SSF103025">
    <property type="entry name" value="Folate-binding domain"/>
    <property type="match status" value="1"/>
</dbReference>
<evidence type="ECO:0000255" key="1">
    <source>
        <dbReference type="HAMAP-Rule" id="MF_01175"/>
    </source>
</evidence>
<feature type="chain" id="PRO_1000065777" description="tRNA-modifying protein YgfZ">
    <location>
        <begin position="1"/>
        <end position="330"/>
    </location>
</feature>
<feature type="binding site" evidence="1">
    <location>
        <position position="28"/>
    </location>
    <ligand>
        <name>folate</name>
        <dbReference type="ChEBI" id="CHEBI:62501"/>
    </ligand>
</feature>
<feature type="binding site" evidence="1">
    <location>
        <position position="190"/>
    </location>
    <ligand>
        <name>folate</name>
        <dbReference type="ChEBI" id="CHEBI:62501"/>
    </ligand>
</feature>
<keyword id="KW-0963">Cytoplasm</keyword>
<keyword id="KW-0290">Folate-binding</keyword>
<keyword id="KW-0819">tRNA processing</keyword>
<gene>
    <name type="ordered locus">Spro_3899</name>
</gene>
<accession>A8GIQ4</accession>
<reference key="1">
    <citation type="submission" date="2007-09" db="EMBL/GenBank/DDBJ databases">
        <title>Complete sequence of chromosome of Serratia proteamaculans 568.</title>
        <authorList>
            <consortium name="US DOE Joint Genome Institute"/>
            <person name="Copeland A."/>
            <person name="Lucas S."/>
            <person name="Lapidus A."/>
            <person name="Barry K."/>
            <person name="Glavina del Rio T."/>
            <person name="Dalin E."/>
            <person name="Tice H."/>
            <person name="Pitluck S."/>
            <person name="Chain P."/>
            <person name="Malfatti S."/>
            <person name="Shin M."/>
            <person name="Vergez L."/>
            <person name="Schmutz J."/>
            <person name="Larimer F."/>
            <person name="Land M."/>
            <person name="Hauser L."/>
            <person name="Kyrpides N."/>
            <person name="Kim E."/>
            <person name="Taghavi S."/>
            <person name="Newman L."/>
            <person name="Vangronsveld J."/>
            <person name="van der Lelie D."/>
            <person name="Richardson P."/>
        </authorList>
    </citation>
    <scope>NUCLEOTIDE SEQUENCE [LARGE SCALE GENOMIC DNA]</scope>
    <source>
        <strain>568</strain>
    </source>
</reference>
<comment type="function">
    <text evidence="1">Folate-binding protein involved in regulating the level of ATP-DnaA and in the modification of some tRNAs. It is probably a key factor in regulatory networks that act via tRNA modification, such as initiation of chromosomal replication.</text>
</comment>
<comment type="subcellular location">
    <subcellularLocation>
        <location evidence="1">Cytoplasm</location>
    </subcellularLocation>
</comment>
<comment type="similarity">
    <text evidence="1">Belongs to the tRNA-modifying YgfZ family.</text>
</comment>
<protein>
    <recommendedName>
        <fullName evidence="1">tRNA-modifying protein YgfZ</fullName>
    </recommendedName>
</protein>
<sequence>MAYKIPFPPRQPSASSHLPLTLISLEDWALVTLNGPDRVKYLQGQVTADIEALPADSHVLCGHCDAKGKMWSNLRLFHRGEGFAYLERRSVLDSQLAEIKKYAVFSKLTIAADSEAVLLGVAGFQARAALAGVFNSLPDAEHQVVQDGETTLLHFSLPAERFLLVTTAAVAEQLVDKLHEQAELNDSQQWLTLDIEAGYPVIDAANSGQFIPQATNLQALDGISFSKGCYTGQEMVARAKFRGANKRALYWLEGKAGRVPQAAEDVELQLGENWRRTGTVLSAARLADGTLWVQVVLNNDLDADSKLRVRDDATSQLAIKPLPYSLAEEK</sequence>
<name>YGFZ_SERP5</name>
<organism>
    <name type="scientific">Serratia proteamaculans (strain 568)</name>
    <dbReference type="NCBI Taxonomy" id="399741"/>
    <lineage>
        <taxon>Bacteria</taxon>
        <taxon>Pseudomonadati</taxon>
        <taxon>Pseudomonadota</taxon>
        <taxon>Gammaproteobacteria</taxon>
        <taxon>Enterobacterales</taxon>
        <taxon>Yersiniaceae</taxon>
        <taxon>Serratia</taxon>
    </lineage>
</organism>
<proteinExistence type="inferred from homology"/>